<proteinExistence type="evidence at protein level"/>
<protein>
    <recommendedName>
        <fullName>Azurin</fullName>
    </recommendedName>
</protein>
<name>AZUR_ALCFA</name>
<evidence type="ECO:0000269" key="1">
    <source>
    </source>
</evidence>
<evidence type="ECO:0000269" key="2">
    <source>
    </source>
</evidence>
<evidence type="ECO:0000269" key="3">
    <source>
    </source>
</evidence>
<evidence type="ECO:0000269" key="4">
    <source>
    </source>
</evidence>
<evidence type="ECO:0007829" key="5">
    <source>
        <dbReference type="PDB" id="2IAA"/>
    </source>
</evidence>
<reference key="1">
    <citation type="book" date="1971" name="Developpements recents dans l'etude chimique de la structure des proteines">
        <editorList>
            <person name="Preverio A."/>
            <person name="Pechere J.-F."/>
            <person name="Coletti-preverio M.-A."/>
        </editorList>
        <authorList>
            <person name="Ambler R.P."/>
        </authorList>
    </citation>
    <scope>PROTEIN SEQUENCE</scope>
    <source>
        <strain>ATCC 8750 / DSM 30030 / CCUG 1814 / LMG 1229 / NBRC 13111 / NCIMB 8156 / NCTC 11953 / Conn 16</strain>
    </source>
</reference>
<reference key="2">
    <citation type="journal article" date="1981" name="Eur. J. Biochem.">
        <title>Electron transfer between azurin from Alcaligenes faecalis and cytochrome c551 from Pseudomonas aeruginosa.</title>
        <authorList>
            <person name="Rosen P."/>
            <person name="Segal M."/>
            <person name="Pecht I."/>
        </authorList>
    </citation>
    <scope>FUNCTION</scope>
</reference>
<reference key="3">
    <citation type="journal article" date="1982" name="Proc. Natl. Acad. Sci. U.S.A.">
        <title>Proton NMR of the histidines of azurin from Alcaligenes faecalis: linkage of histidine-35 with redox kinetics.</title>
        <authorList>
            <person name="Mitra S."/>
            <person name="Bersohn R."/>
        </authorList>
    </citation>
    <scope>COFACTOR</scope>
</reference>
<reference key="4">
    <citation type="journal article" date="1984" name="J. Biol. Chem.">
        <title>Comparative Cd-113 nuclear magnetic resonance studies of Cd(II)-substituted blue copper proteins.</title>
        <authorList>
            <person name="Engeseth H.R."/>
            <person name="McMillin D.R."/>
            <person name="Otvos J.D."/>
        </authorList>
    </citation>
    <scope>COFACTOR</scope>
</reference>
<reference key="5">
    <citation type="journal article" date="2006" name="Biochemistry">
        <title>Crystal structure of an electron transfer complex between aromatic amine dehydrogenase and azurin from Alcaligenes faecalis.</title>
        <authorList>
            <person name="Sukumar N."/>
            <person name="Chen Z.-W."/>
            <person name="Ferrari D."/>
            <person name="Merli A."/>
            <person name="Rossi G.L."/>
            <person name="Bellamy H.D."/>
            <person name="Chistoserdov A.Y."/>
            <person name="Davidson V.L."/>
            <person name="Mathews F.S."/>
        </authorList>
    </citation>
    <scope>X-RAY CRYSTALLOGRAPHY (2.5 ANGSTROMS) IN COMPLEX WITH COPPER; AAUA AND AAUB</scope>
    <scope>FUNCTION</scope>
    <scope>COFACTOR</scope>
    <scope>SUBUNIT</scope>
    <scope>DISULFIDE BONDS</scope>
    <source>
        <strain>ATCC 49677 / NBRC 14479</strain>
    </source>
</reference>
<sequence>ACDVSIEGNDSMQFNTKSIVVDKTCKEFTINLKHTGKLPKAAMGHNVVVSKKSDESAVATDGMKAGLNNDYVKAGDERVIAHTSVIGGGETDSVTFDVSKLKEGEDYAFFCSFPGHWSIMKGTIELGS</sequence>
<keyword id="KW-0002">3D-structure</keyword>
<keyword id="KW-0186">Copper</keyword>
<keyword id="KW-0903">Direct protein sequencing</keyword>
<keyword id="KW-1015">Disulfide bond</keyword>
<keyword id="KW-0249">Electron transport</keyword>
<keyword id="KW-0479">Metal-binding</keyword>
<keyword id="KW-0574">Periplasm</keyword>
<keyword id="KW-0813">Transport</keyword>
<dbReference type="PIR" id="A00287">
    <property type="entry name" value="AZALCF"/>
</dbReference>
<dbReference type="PDB" id="2H3X">
    <property type="method" value="X-ray"/>
    <property type="resolution" value="2.50 A"/>
    <property type="chains" value="C/F=1-128"/>
</dbReference>
<dbReference type="PDB" id="2H47">
    <property type="method" value="X-ray"/>
    <property type="resolution" value="2.60 A"/>
    <property type="chains" value="C=1-128"/>
</dbReference>
<dbReference type="PDB" id="2IAA">
    <property type="method" value="X-ray"/>
    <property type="resolution" value="1.95 A"/>
    <property type="chains" value="C=1-128"/>
</dbReference>
<dbReference type="PDBsum" id="2H3X"/>
<dbReference type="PDBsum" id="2H47"/>
<dbReference type="PDBsum" id="2IAA"/>
<dbReference type="SMR" id="P00281"/>
<dbReference type="STRING" id="511.UZ73_19100"/>
<dbReference type="eggNOG" id="COG3241">
    <property type="taxonomic scope" value="Bacteria"/>
</dbReference>
<dbReference type="EvolutionaryTrace" id="P00281"/>
<dbReference type="GO" id="GO:0042597">
    <property type="term" value="C:periplasmic space"/>
    <property type="evidence" value="ECO:0007669"/>
    <property type="project" value="UniProtKB-SubCell"/>
</dbReference>
<dbReference type="GO" id="GO:0005507">
    <property type="term" value="F:copper ion binding"/>
    <property type="evidence" value="ECO:0007669"/>
    <property type="project" value="InterPro"/>
</dbReference>
<dbReference type="GO" id="GO:0009055">
    <property type="term" value="F:electron transfer activity"/>
    <property type="evidence" value="ECO:0007669"/>
    <property type="project" value="InterPro"/>
</dbReference>
<dbReference type="CDD" id="cd13922">
    <property type="entry name" value="Azurin"/>
    <property type="match status" value="1"/>
</dbReference>
<dbReference type="FunFam" id="2.60.40.420:FF:000040">
    <property type="entry name" value="Azurin"/>
    <property type="match status" value="1"/>
</dbReference>
<dbReference type="Gene3D" id="2.60.40.420">
    <property type="entry name" value="Cupredoxins - blue copper proteins"/>
    <property type="match status" value="1"/>
</dbReference>
<dbReference type="InterPro" id="IPR014068">
    <property type="entry name" value="Azurin"/>
</dbReference>
<dbReference type="InterPro" id="IPR000923">
    <property type="entry name" value="BlueCu_1"/>
</dbReference>
<dbReference type="InterPro" id="IPR028871">
    <property type="entry name" value="BlueCu_1_BS"/>
</dbReference>
<dbReference type="InterPro" id="IPR050845">
    <property type="entry name" value="Cu-binding_ET"/>
</dbReference>
<dbReference type="InterPro" id="IPR008972">
    <property type="entry name" value="Cupredoxin"/>
</dbReference>
<dbReference type="NCBIfam" id="TIGR02695">
    <property type="entry name" value="azurin"/>
    <property type="match status" value="1"/>
</dbReference>
<dbReference type="PANTHER" id="PTHR38439">
    <property type="entry name" value="AURACYANIN-B"/>
    <property type="match status" value="1"/>
</dbReference>
<dbReference type="PANTHER" id="PTHR38439:SF2">
    <property type="entry name" value="OUTER MEMBRANE PROTEIN H.8"/>
    <property type="match status" value="1"/>
</dbReference>
<dbReference type="Pfam" id="PF00127">
    <property type="entry name" value="Copper-bind"/>
    <property type="match status" value="1"/>
</dbReference>
<dbReference type="SUPFAM" id="SSF49503">
    <property type="entry name" value="Cupredoxins"/>
    <property type="match status" value="1"/>
</dbReference>
<dbReference type="PROSITE" id="PS00196">
    <property type="entry name" value="COPPER_BLUE"/>
    <property type="match status" value="1"/>
</dbReference>
<comment type="function">
    <text evidence="1 3">Transfers electrons from cytochrome c551 to cytochrome oxidase. Transfers electrons from the tryptophan tryptophylquinone of the aromatic amine dehydrogenase heterotetramer.</text>
</comment>
<comment type="cofactor">
    <cofactor evidence="1 2 4">
        <name>Cu cation</name>
        <dbReference type="ChEBI" id="CHEBI:23378"/>
    </cofactor>
    <text evidence="1 2 4">Binds 1 copper ion per subunit.</text>
</comment>
<comment type="subunit">
    <text evidence="1">Monomer. Interacts with the AAUA/AAUB heterotetramer complex.</text>
</comment>
<comment type="subcellular location">
    <subcellularLocation>
        <location>Periplasm</location>
    </subcellularLocation>
</comment>
<feature type="chain" id="PRO_0000085542" description="Azurin">
    <location>
        <begin position="1"/>
        <end position="128"/>
    </location>
</feature>
<feature type="domain" description="Plastocyanin-like">
    <location>
        <begin position="1"/>
        <end position="128"/>
    </location>
</feature>
<feature type="binding site" evidence="1">
    <location>
        <position position="45"/>
    </location>
    <ligand>
        <name>Cu cation</name>
        <dbReference type="ChEBI" id="CHEBI:23378"/>
    </ligand>
</feature>
<feature type="binding site" evidence="1">
    <location>
        <position position="111"/>
    </location>
    <ligand>
        <name>Cu cation</name>
        <dbReference type="ChEBI" id="CHEBI:23378"/>
    </ligand>
</feature>
<feature type="binding site" evidence="1">
    <location>
        <position position="116"/>
    </location>
    <ligand>
        <name>Cu cation</name>
        <dbReference type="ChEBI" id="CHEBI:23378"/>
    </ligand>
</feature>
<feature type="binding site" evidence="1">
    <location>
        <position position="120"/>
    </location>
    <ligand>
        <name>Cu cation</name>
        <dbReference type="ChEBI" id="CHEBI:23378"/>
    </ligand>
</feature>
<feature type="disulfide bond" evidence="1">
    <location>
        <begin position="2"/>
        <end position="25"/>
    </location>
</feature>
<feature type="strand" evidence="5">
    <location>
        <begin position="3"/>
        <end position="8"/>
    </location>
</feature>
<feature type="strand" evidence="5">
    <location>
        <begin position="17"/>
        <end position="21"/>
    </location>
</feature>
<feature type="strand" evidence="5">
    <location>
        <begin position="26"/>
        <end position="34"/>
    </location>
</feature>
<feature type="helix" evidence="5">
    <location>
        <begin position="40"/>
        <end position="43"/>
    </location>
</feature>
<feature type="strand" evidence="5">
    <location>
        <begin position="48"/>
        <end position="51"/>
    </location>
</feature>
<feature type="helix" evidence="5">
    <location>
        <begin position="54"/>
        <end position="65"/>
    </location>
</feature>
<feature type="helix" evidence="5">
    <location>
        <begin position="67"/>
        <end position="69"/>
    </location>
</feature>
<feature type="strand" evidence="5">
    <location>
        <begin position="79"/>
        <end position="82"/>
    </location>
</feature>
<feature type="strand" evidence="5">
    <location>
        <begin position="91"/>
        <end position="99"/>
    </location>
</feature>
<feature type="strand" evidence="5">
    <location>
        <begin position="107"/>
        <end position="110"/>
    </location>
</feature>
<feature type="turn" evidence="5">
    <location>
        <begin position="117"/>
        <end position="119"/>
    </location>
</feature>
<feature type="strand" evidence="5">
    <location>
        <begin position="120"/>
        <end position="126"/>
    </location>
</feature>
<accession>P00281</accession>
<organism>
    <name type="scientific">Alcaligenes faecalis</name>
    <dbReference type="NCBI Taxonomy" id="511"/>
    <lineage>
        <taxon>Bacteria</taxon>
        <taxon>Pseudomonadati</taxon>
        <taxon>Pseudomonadota</taxon>
        <taxon>Betaproteobacteria</taxon>
        <taxon>Burkholderiales</taxon>
        <taxon>Alcaligenaceae</taxon>
        <taxon>Alcaligenes</taxon>
    </lineage>
</organism>